<protein>
    <recommendedName>
        <fullName evidence="1">Orotate phosphoribosyltransferase</fullName>
        <shortName evidence="1">OPRT</shortName>
        <shortName evidence="1">OPRTase</shortName>
        <ecNumber evidence="1">2.4.2.10</ecNumber>
    </recommendedName>
</protein>
<evidence type="ECO:0000255" key="1">
    <source>
        <dbReference type="HAMAP-Rule" id="MF_01208"/>
    </source>
</evidence>
<feature type="chain" id="PRO_1000066223" description="Orotate phosphoribosyltransferase">
    <location>
        <begin position="1"/>
        <end position="221"/>
    </location>
</feature>
<feature type="binding site" description="in other chain" evidence="1">
    <location>
        <position position="26"/>
    </location>
    <ligand>
        <name>5-phospho-alpha-D-ribose 1-diphosphate</name>
        <dbReference type="ChEBI" id="CHEBI:58017"/>
        <note>ligand shared between dimeric partners</note>
    </ligand>
</feature>
<feature type="binding site" evidence="1">
    <location>
        <begin position="34"/>
        <end position="35"/>
    </location>
    <ligand>
        <name>orotate</name>
        <dbReference type="ChEBI" id="CHEBI:30839"/>
    </ligand>
</feature>
<feature type="binding site" description="in other chain" evidence="1">
    <location>
        <begin position="72"/>
        <end position="73"/>
    </location>
    <ligand>
        <name>5-phospho-alpha-D-ribose 1-diphosphate</name>
        <dbReference type="ChEBI" id="CHEBI:58017"/>
        <note>ligand shared between dimeric partners</note>
    </ligand>
</feature>
<feature type="binding site" evidence="1">
    <location>
        <position position="99"/>
    </location>
    <ligand>
        <name>5-phospho-alpha-D-ribose 1-diphosphate</name>
        <dbReference type="ChEBI" id="CHEBI:58017"/>
        <note>ligand shared between dimeric partners</note>
    </ligand>
</feature>
<feature type="binding site" description="in other chain" evidence="1">
    <location>
        <position position="100"/>
    </location>
    <ligand>
        <name>5-phospho-alpha-D-ribose 1-diphosphate</name>
        <dbReference type="ChEBI" id="CHEBI:58017"/>
        <note>ligand shared between dimeric partners</note>
    </ligand>
</feature>
<feature type="binding site" evidence="1">
    <location>
        <position position="103"/>
    </location>
    <ligand>
        <name>5-phospho-alpha-D-ribose 1-diphosphate</name>
        <dbReference type="ChEBI" id="CHEBI:58017"/>
        <note>ligand shared between dimeric partners</note>
    </ligand>
</feature>
<feature type="binding site" evidence="1">
    <location>
        <position position="105"/>
    </location>
    <ligand>
        <name>5-phospho-alpha-D-ribose 1-diphosphate</name>
        <dbReference type="ChEBI" id="CHEBI:58017"/>
        <note>ligand shared between dimeric partners</note>
    </ligand>
</feature>
<feature type="binding site" description="in other chain" evidence="1">
    <location>
        <begin position="124"/>
        <end position="132"/>
    </location>
    <ligand>
        <name>5-phospho-alpha-D-ribose 1-diphosphate</name>
        <dbReference type="ChEBI" id="CHEBI:58017"/>
        <note>ligand shared between dimeric partners</note>
    </ligand>
</feature>
<feature type="binding site" evidence="1">
    <location>
        <position position="128"/>
    </location>
    <ligand>
        <name>orotate</name>
        <dbReference type="ChEBI" id="CHEBI:30839"/>
    </ligand>
</feature>
<feature type="binding site" evidence="1">
    <location>
        <position position="156"/>
    </location>
    <ligand>
        <name>orotate</name>
        <dbReference type="ChEBI" id="CHEBI:30839"/>
    </ligand>
</feature>
<keyword id="KW-0328">Glycosyltransferase</keyword>
<keyword id="KW-0460">Magnesium</keyword>
<keyword id="KW-0665">Pyrimidine biosynthesis</keyword>
<keyword id="KW-0808">Transferase</keyword>
<accession>Q48AN2</accession>
<name>PYRE_COLP3</name>
<comment type="function">
    <text evidence="1">Catalyzes the transfer of a ribosyl phosphate group from 5-phosphoribose 1-diphosphate to orotate, leading to the formation of orotidine monophosphate (OMP).</text>
</comment>
<comment type="catalytic activity">
    <reaction evidence="1">
        <text>orotidine 5'-phosphate + diphosphate = orotate + 5-phospho-alpha-D-ribose 1-diphosphate</text>
        <dbReference type="Rhea" id="RHEA:10380"/>
        <dbReference type="ChEBI" id="CHEBI:30839"/>
        <dbReference type="ChEBI" id="CHEBI:33019"/>
        <dbReference type="ChEBI" id="CHEBI:57538"/>
        <dbReference type="ChEBI" id="CHEBI:58017"/>
        <dbReference type="EC" id="2.4.2.10"/>
    </reaction>
</comment>
<comment type="cofactor">
    <cofactor evidence="1">
        <name>Mg(2+)</name>
        <dbReference type="ChEBI" id="CHEBI:18420"/>
    </cofactor>
</comment>
<comment type="pathway">
    <text evidence="1">Pyrimidine metabolism; UMP biosynthesis via de novo pathway; UMP from orotate: step 1/2.</text>
</comment>
<comment type="subunit">
    <text evidence="1">Homodimer.</text>
</comment>
<comment type="similarity">
    <text evidence="1">Belongs to the purine/pyrimidine phosphoribosyltransferase family. PyrE subfamily.</text>
</comment>
<sequence>MKDYQREFIEFAIEKQVLRFGEFTLKSGRVSPYFFNAGMFKTGGDLARLGRFYAATLMDAKIDFDLVFGPAYKGIPIATTTTVALYDHHNVDVPYCFNRKEAKTHGEGGSLVGAELEGKIMLVDDVITAGTAIRESMEIIKAHGAQLSGVLIALDRQEKGQGQLSAIQEVERDFGTQVAAIVTLGDVVTYLEEKLEGKVANQPELAENLASIKKYRLNYGI</sequence>
<reference key="1">
    <citation type="journal article" date="2005" name="Proc. Natl. Acad. Sci. U.S.A.">
        <title>The psychrophilic lifestyle as revealed by the genome sequence of Colwellia psychrerythraea 34H through genomic and proteomic analyses.</title>
        <authorList>
            <person name="Methe B.A."/>
            <person name="Nelson K.E."/>
            <person name="Deming J.W."/>
            <person name="Momen B."/>
            <person name="Melamud E."/>
            <person name="Zhang X."/>
            <person name="Moult J."/>
            <person name="Madupu R."/>
            <person name="Nelson W.C."/>
            <person name="Dodson R.J."/>
            <person name="Brinkac L.M."/>
            <person name="Daugherty S.C."/>
            <person name="Durkin A.S."/>
            <person name="DeBoy R.T."/>
            <person name="Kolonay J.F."/>
            <person name="Sullivan S.A."/>
            <person name="Zhou L."/>
            <person name="Davidsen T.M."/>
            <person name="Wu M."/>
            <person name="Huston A.L."/>
            <person name="Lewis M."/>
            <person name="Weaver B."/>
            <person name="Weidman J.F."/>
            <person name="Khouri H."/>
            <person name="Utterback T.R."/>
            <person name="Feldblyum T.V."/>
            <person name="Fraser C.M."/>
        </authorList>
    </citation>
    <scope>NUCLEOTIDE SEQUENCE [LARGE SCALE GENOMIC DNA]</scope>
    <source>
        <strain>34H / ATCC BAA-681</strain>
    </source>
</reference>
<organism>
    <name type="scientific">Colwellia psychrerythraea (strain 34H / ATCC BAA-681)</name>
    <name type="common">Vibrio psychroerythus</name>
    <dbReference type="NCBI Taxonomy" id="167879"/>
    <lineage>
        <taxon>Bacteria</taxon>
        <taxon>Pseudomonadati</taxon>
        <taxon>Pseudomonadota</taxon>
        <taxon>Gammaproteobacteria</taxon>
        <taxon>Alteromonadales</taxon>
        <taxon>Colwelliaceae</taxon>
        <taxon>Colwellia</taxon>
    </lineage>
</organism>
<proteinExistence type="inferred from homology"/>
<gene>
    <name evidence="1" type="primary">pyrE</name>
    <name type="ordered locus">CPS_0113</name>
</gene>
<dbReference type="EC" id="2.4.2.10" evidence="1"/>
<dbReference type="EMBL" id="CP000083">
    <property type="protein sequence ID" value="AAZ24822.1"/>
    <property type="molecule type" value="Genomic_DNA"/>
</dbReference>
<dbReference type="RefSeq" id="WP_011040988.1">
    <property type="nucleotide sequence ID" value="NC_003910.7"/>
</dbReference>
<dbReference type="SMR" id="Q48AN2"/>
<dbReference type="STRING" id="167879.CPS_0113"/>
<dbReference type="KEGG" id="cps:CPS_0113"/>
<dbReference type="eggNOG" id="COG0461">
    <property type="taxonomic scope" value="Bacteria"/>
</dbReference>
<dbReference type="HOGENOM" id="CLU_074878_0_1_6"/>
<dbReference type="UniPathway" id="UPA00070">
    <property type="reaction ID" value="UER00119"/>
</dbReference>
<dbReference type="Proteomes" id="UP000000547">
    <property type="component" value="Chromosome"/>
</dbReference>
<dbReference type="GO" id="GO:0005737">
    <property type="term" value="C:cytoplasm"/>
    <property type="evidence" value="ECO:0007669"/>
    <property type="project" value="TreeGrafter"/>
</dbReference>
<dbReference type="GO" id="GO:0000287">
    <property type="term" value="F:magnesium ion binding"/>
    <property type="evidence" value="ECO:0007669"/>
    <property type="project" value="UniProtKB-UniRule"/>
</dbReference>
<dbReference type="GO" id="GO:0004588">
    <property type="term" value="F:orotate phosphoribosyltransferase activity"/>
    <property type="evidence" value="ECO:0007669"/>
    <property type="project" value="UniProtKB-UniRule"/>
</dbReference>
<dbReference type="GO" id="GO:0006207">
    <property type="term" value="P:'de novo' pyrimidine nucleobase biosynthetic process"/>
    <property type="evidence" value="ECO:0007669"/>
    <property type="project" value="TreeGrafter"/>
</dbReference>
<dbReference type="GO" id="GO:0044205">
    <property type="term" value="P:'de novo' UMP biosynthetic process"/>
    <property type="evidence" value="ECO:0007669"/>
    <property type="project" value="UniProtKB-UniRule"/>
</dbReference>
<dbReference type="GO" id="GO:0046132">
    <property type="term" value="P:pyrimidine ribonucleoside biosynthetic process"/>
    <property type="evidence" value="ECO:0007669"/>
    <property type="project" value="TreeGrafter"/>
</dbReference>
<dbReference type="CDD" id="cd06223">
    <property type="entry name" value="PRTases_typeI"/>
    <property type="match status" value="1"/>
</dbReference>
<dbReference type="FunFam" id="3.40.50.2020:FF:000008">
    <property type="entry name" value="Orotate phosphoribosyltransferase"/>
    <property type="match status" value="1"/>
</dbReference>
<dbReference type="Gene3D" id="3.40.50.2020">
    <property type="match status" value="1"/>
</dbReference>
<dbReference type="HAMAP" id="MF_01208">
    <property type="entry name" value="PyrE"/>
    <property type="match status" value="1"/>
</dbReference>
<dbReference type="InterPro" id="IPR023031">
    <property type="entry name" value="OPRT"/>
</dbReference>
<dbReference type="InterPro" id="IPR004467">
    <property type="entry name" value="Or_phspho_trans_dom"/>
</dbReference>
<dbReference type="InterPro" id="IPR000836">
    <property type="entry name" value="PRibTrfase_dom"/>
</dbReference>
<dbReference type="InterPro" id="IPR029057">
    <property type="entry name" value="PRTase-like"/>
</dbReference>
<dbReference type="NCBIfam" id="TIGR00336">
    <property type="entry name" value="pyrE"/>
    <property type="match status" value="1"/>
</dbReference>
<dbReference type="PANTHER" id="PTHR46683">
    <property type="entry name" value="OROTATE PHOSPHORIBOSYLTRANSFERASE 1-RELATED"/>
    <property type="match status" value="1"/>
</dbReference>
<dbReference type="PANTHER" id="PTHR46683:SF1">
    <property type="entry name" value="OROTATE PHOSPHORIBOSYLTRANSFERASE 1-RELATED"/>
    <property type="match status" value="1"/>
</dbReference>
<dbReference type="Pfam" id="PF00156">
    <property type="entry name" value="Pribosyltran"/>
    <property type="match status" value="1"/>
</dbReference>
<dbReference type="SUPFAM" id="SSF53271">
    <property type="entry name" value="PRTase-like"/>
    <property type="match status" value="1"/>
</dbReference>
<dbReference type="PROSITE" id="PS00103">
    <property type="entry name" value="PUR_PYR_PR_TRANSFER"/>
    <property type="match status" value="1"/>
</dbReference>